<accession>A0A1I9LM04</accession>
<accession>F4J245</accession>
<accession>Q9M1J4</accession>
<organism>
    <name type="scientific">Arabidopsis thaliana</name>
    <name type="common">Mouse-ear cress</name>
    <dbReference type="NCBI Taxonomy" id="3702"/>
    <lineage>
        <taxon>Eukaryota</taxon>
        <taxon>Viridiplantae</taxon>
        <taxon>Streptophyta</taxon>
        <taxon>Embryophyta</taxon>
        <taxon>Tracheophyta</taxon>
        <taxon>Spermatophyta</taxon>
        <taxon>Magnoliopsida</taxon>
        <taxon>eudicotyledons</taxon>
        <taxon>Gunneridae</taxon>
        <taxon>Pentapetalae</taxon>
        <taxon>rosids</taxon>
        <taxon>malvids</taxon>
        <taxon>Brassicales</taxon>
        <taxon>Brassicaceae</taxon>
        <taxon>Camelineae</taxon>
        <taxon>Arabidopsis</taxon>
    </lineage>
</organism>
<sequence length="1410" mass="157118">MAPPFVFPQILRALEEDPEDNHRLFAQNPVDVTSLRPSDLEEFVKGVSFDLSDRELFCVEDQDVFDRVYSLVRSFFSLPPSCKCNLVESLRSNLSVLLPNVDSISRSVQDQEDDVPIIDRITSHRNALKIYTFFLLTVVMNEESHISSVETTKVAARGRKKQIIQSWNWEPQRGRMLNLIANSLEINLSLLFGSSDLDENYLSFIVKNSFTLFENATILKDAETKDALCRIIGASATKYHYIVQSCASIMHLIHKYDFAVVHIADAVARAESKYSDGTLAVTIIRDIGRTDPKAYVKDTAGADNVGRFLVELADRLPKLMSTNVGVLVPHFGGESYKIRNALVGVLGKLVAKAFNDVEGDMSSKSLRLRTKQAMLEILLERCRDVSAYTRSRVLQVWAELCEEHSVSIGLWNEVASLSAGRLEDKSAIVRKSALNLLIMMLQHNPFGPQLRIASFEATLEQYKRKLNELEPTEHASKESTSDGESCNGDGEIDDLHLETTTKIHQDSLSDSCQPENGEEISEKDVSVPDIGNVEQTKALIASLEAGLRFSKCMSASMPILVQLMASSSATDVENAILLLMRCKQFQIDGAEACLRKILPLAFSQDKSIYEAVENAFISIYIRKNPVDTAKQLLNLAIDSNIGDQAALEFIVNALVSKGEISSSTTSALWDFFCFNINGTTAEQSRGALSILCMAAKSSPRILGSHIQDIIDIGFGRWAKVEPLLARTACTVIQRFSEEDRKKLLLSSGSRLFGILESLITGNWLPENIYYATADKAISAIYMIHPTPETLASTIIKKSLSTVFDVVEQEEAQTDTENNKVDILTPVQVAKLSRFLFAVSHIAMNQLVYIESCIQKIRRQKTKKDKPAAESQNTEENLEATQENNGINAELGLAASDDALLDTLAERAEREIVSGGSVEKNLIGECATFLSKLCRNFSLLQKHPELQASAMLALCRFMIIDASFCESNLQLLFTVVENAPSEVVRSNCTLSLGDLAVRFPNLLEPWTENMYARLRDASVSVRKNAVLVLSHLILNDMMKVKGYIYEMAICIEDDVERISSLAKLFFHELSKKGSNPIYNLLPDILGQLSNRNLERESFCNVMQFLIGSIKKDKQMEALVEKLCNRFSGVTDGKQWEYISYSLSLLTFTEKGIKKLIESFKSYEHALAEDLVTENFRSIINKGKKFAKPELKACIEEFEEKINKFHMEKKEQEETARNAEVHREKTKTMESLAVLSKVKEEPVEEYDEGEGVSDSEIVDPSMEESGDNLVETESEEEPSDSEEEPDSAQCGTAIPRYLNQKTSGDNLIETEPEEEQSDSEPDSAQCGTTNPRSLNRKTSGDNLIETESEEEQSDSEEEPSDSEEEPDSAQCGTTNPRSLNQKTSGGEEGESESKSTESSSSIRRNLRSGSRS</sequence>
<evidence type="ECO:0000250" key="1">
    <source>
        <dbReference type="UniProtKB" id="Q15021"/>
    </source>
</evidence>
<evidence type="ECO:0000256" key="2">
    <source>
        <dbReference type="SAM" id="MobiDB-lite"/>
    </source>
</evidence>
<evidence type="ECO:0000269" key="3">
    <source>
    </source>
</evidence>
<evidence type="ECO:0000269" key="4">
    <source>
    </source>
</evidence>
<evidence type="ECO:0000269" key="5">
    <source>
    </source>
</evidence>
<evidence type="ECO:0000303" key="6">
    <source>
    </source>
</evidence>
<evidence type="ECO:0000303" key="7">
    <source>
    </source>
</evidence>
<evidence type="ECO:0000305" key="8"/>
<evidence type="ECO:0000312" key="9">
    <source>
        <dbReference type="Araport" id="AT3G57060"/>
    </source>
</evidence>
<evidence type="ECO:0000312" key="10">
    <source>
        <dbReference type="EMBL" id="CAB72176.1"/>
    </source>
</evidence>
<dbReference type="EMBL" id="AL138655">
    <property type="protein sequence ID" value="CAB72176.1"/>
    <property type="status" value="ALT_SEQ"/>
    <property type="molecule type" value="Genomic_DNA"/>
</dbReference>
<dbReference type="EMBL" id="CP002686">
    <property type="protein sequence ID" value="AEE79606.1"/>
    <property type="molecule type" value="Genomic_DNA"/>
</dbReference>
<dbReference type="EMBL" id="CP002686">
    <property type="protein sequence ID" value="ANM63612.1"/>
    <property type="molecule type" value="Genomic_DNA"/>
</dbReference>
<dbReference type="PIR" id="T47766">
    <property type="entry name" value="T47766"/>
</dbReference>
<dbReference type="RefSeq" id="NP_001325687.1">
    <molecule id="A0A1I9LM04-1"/>
    <property type="nucleotide sequence ID" value="NM_001339840.1"/>
</dbReference>
<dbReference type="RefSeq" id="NP_191265.2">
    <molecule id="A0A1I9LM04-2"/>
    <property type="nucleotide sequence ID" value="NM_115565.2"/>
</dbReference>
<dbReference type="SMR" id="A0A1I9LM04"/>
<dbReference type="FunCoup" id="A0A1I9LM04">
    <property type="interactions" value="2088"/>
</dbReference>
<dbReference type="GlyGen" id="A0A1I9LM04">
    <property type="glycosylation" value="1 site"/>
</dbReference>
<dbReference type="iPTMnet" id="A0A1I9LM04"/>
<dbReference type="ProteomicsDB" id="207531"/>
<dbReference type="ProteomicsDB" id="208342"/>
<dbReference type="EnsemblPlants" id="AT3G57060.1">
    <molecule id="A0A1I9LM04-2"/>
    <property type="protein sequence ID" value="AT3G57060.1"/>
    <property type="gene ID" value="AT3G57060"/>
</dbReference>
<dbReference type="EnsemblPlants" id="AT3G57060.3">
    <molecule id="A0A1I9LM04-1"/>
    <property type="protein sequence ID" value="AT3G57060.3"/>
    <property type="gene ID" value="AT3G57060"/>
</dbReference>
<dbReference type="GeneID" id="824873"/>
<dbReference type="Gramene" id="AT3G57060.1">
    <molecule id="A0A1I9LM04-2"/>
    <property type="protein sequence ID" value="AT3G57060.1"/>
    <property type="gene ID" value="AT3G57060"/>
</dbReference>
<dbReference type="Gramene" id="AT3G57060.3">
    <molecule id="A0A1I9LM04-1"/>
    <property type="protein sequence ID" value="AT3G57060.3"/>
    <property type="gene ID" value="AT3G57060"/>
</dbReference>
<dbReference type="KEGG" id="ath:AT3G57060"/>
<dbReference type="Araport" id="AT3G57060"/>
<dbReference type="TAIR" id="AT3G57060"/>
<dbReference type="HOGENOM" id="CLU_001867_2_1_1"/>
<dbReference type="InParanoid" id="A0A1I9LM04"/>
<dbReference type="OMA" id="CPLEKLW"/>
<dbReference type="PRO" id="PR:A0A1I9LM04"/>
<dbReference type="Proteomes" id="UP000006548">
    <property type="component" value="Chromosome 3"/>
</dbReference>
<dbReference type="ExpressionAtlas" id="A0A1I9LM04">
    <property type="expression patterns" value="baseline and differential"/>
</dbReference>
<dbReference type="GO" id="GO:0005694">
    <property type="term" value="C:chromosome"/>
    <property type="evidence" value="ECO:0007669"/>
    <property type="project" value="UniProtKB-SubCell"/>
</dbReference>
<dbReference type="GO" id="GO:0005634">
    <property type="term" value="C:nucleus"/>
    <property type="evidence" value="ECO:0007669"/>
    <property type="project" value="UniProtKB-SubCell"/>
</dbReference>
<dbReference type="GO" id="GO:0051301">
    <property type="term" value="P:cell division"/>
    <property type="evidence" value="ECO:0007669"/>
    <property type="project" value="UniProtKB-KW"/>
</dbReference>
<dbReference type="GO" id="GO:0006325">
    <property type="term" value="P:chromatin organization"/>
    <property type="evidence" value="ECO:0000315"/>
    <property type="project" value="UniProtKB"/>
</dbReference>
<dbReference type="GO" id="GO:0000278">
    <property type="term" value="P:mitotic cell cycle"/>
    <property type="evidence" value="ECO:0000270"/>
    <property type="project" value="UniProtKB"/>
</dbReference>
<dbReference type="GO" id="GO:0007076">
    <property type="term" value="P:mitotic chromosome condensation"/>
    <property type="evidence" value="ECO:0007669"/>
    <property type="project" value="InterPro"/>
</dbReference>
<dbReference type="FunFam" id="1.25.10.10:FF:000403">
    <property type="entry name" value="Condensin complex subunit 1"/>
    <property type="match status" value="1"/>
</dbReference>
<dbReference type="Gene3D" id="1.25.10.10">
    <property type="entry name" value="Leucine-rich Repeat Variant"/>
    <property type="match status" value="2"/>
</dbReference>
<dbReference type="InterPro" id="IPR011989">
    <property type="entry name" value="ARM-like"/>
</dbReference>
<dbReference type="InterPro" id="IPR016024">
    <property type="entry name" value="ARM-type_fold"/>
</dbReference>
<dbReference type="InterPro" id="IPR026971">
    <property type="entry name" value="CND1/NCAPD3"/>
</dbReference>
<dbReference type="InterPro" id="IPR032682">
    <property type="entry name" value="Cnd1_C"/>
</dbReference>
<dbReference type="InterPro" id="IPR007673">
    <property type="entry name" value="Condensin_cplx_su1"/>
</dbReference>
<dbReference type="InterPro" id="IPR024324">
    <property type="entry name" value="Condensin_cplx_su1_N"/>
</dbReference>
<dbReference type="PANTHER" id="PTHR14222">
    <property type="entry name" value="CONDENSIN"/>
    <property type="match status" value="1"/>
</dbReference>
<dbReference type="PANTHER" id="PTHR14222:SF2">
    <property type="entry name" value="CONDENSIN COMPLEX SUBUNIT 1"/>
    <property type="match status" value="1"/>
</dbReference>
<dbReference type="Pfam" id="PF12717">
    <property type="entry name" value="Cnd1"/>
    <property type="match status" value="1"/>
</dbReference>
<dbReference type="Pfam" id="PF12922">
    <property type="entry name" value="Cnd1_N"/>
    <property type="match status" value="1"/>
</dbReference>
<dbReference type="PIRSF" id="PIRSF017127">
    <property type="entry name" value="Condensin_D2"/>
    <property type="match status" value="1"/>
</dbReference>
<dbReference type="SUPFAM" id="SSF48371">
    <property type="entry name" value="ARM repeat"/>
    <property type="match status" value="1"/>
</dbReference>
<proteinExistence type="evidence at transcript level"/>
<protein>
    <recommendedName>
        <fullName evidence="6 7">Condensin-1 complex subunit CAP-D2</fullName>
    </recommendedName>
    <alternativeName>
        <fullName evidence="7">Protein CHROMOSOME-ASSOCIATED POLYPEPTIDE D-2</fullName>
        <shortName evidence="7">AtCap-D2</shortName>
    </alternativeName>
</protein>
<comment type="function">
    <text evidence="1 3 4 5">Essential protein (PubMed:23929493). Regulatory subunit of the condensin complex, a complex required for conversion of interphase chromatin into mitotic-like condense chromosomes (By similarity). The condensin complex probably introduces positive supercoils into relaxed DNA in the presence of type I topoisomerases and converts nicked DNA into positive knotted forms in the presence of type II topoisomerases (By similarity). Required for fertility, growth and euchromatin organization, but not for sister chromatid cohesion (PubMed:23929493). Necessary to maintain normal structural integrity of the meiotic chromosomes during the two nuclear divisions of gametogenesis, especially to maintain compaction of the centromeric repeats and 45S rDNA (PubMed:25065716). Also seems to be involved in crossover formation during meiotic prophase I (PubMed:25065716). Prevents centromeric and pericentromeric heterochromatin repeats association (PubMed:23929493). Contributes to the induction of stress-responsive genes in response to stress treatment (PubMed:16856987).</text>
</comment>
<comment type="subunit">
    <text evidence="1">Component of the condensin complex.</text>
</comment>
<comment type="subcellular location">
    <subcellularLocation>
        <location evidence="5">Chromosome</location>
    </subcellularLocation>
    <subcellularLocation>
        <location evidence="1">Nucleus</location>
    </subcellularLocation>
    <text evidence="5">Associates with the chromosomes throughout meiosis.</text>
</comment>
<comment type="alternative products">
    <event type="alternative splicing"/>
    <isoform>
        <id>A0A1I9LM04-1</id>
        <name>1</name>
        <sequence type="displayed"/>
    </isoform>
    <isoform>
        <id>A0A1I9LM04-2</id>
        <name>2</name>
        <sequence type="described" ref="VSP_061381"/>
    </isoform>
</comment>
<comment type="tissue specificity">
    <text evidence="5">Present in buds.</text>
</comment>
<comment type="developmental stage">
    <text evidence="4">Mostly expressed at bolting, flowering and during seed formation.</text>
</comment>
<comment type="induction">
    <text evidence="4">Regulated in a cell cycle-dependent manner with an increase during G2 phase, highest levels in the middle of G2 and a drop during mitosis.</text>
</comment>
<comment type="disruption phenotype">
    <text evidence="3 4 5">Homozygous mutants are not viable (PubMed:23929493). Heterozygous mutants exhibit a reduced fertility (PubMed:23929493, PubMed:25065716). Non-structural maintenance of chromosomes condensing subunit (PubMed:23929493). During meiosis, elongated chromosome at metaphase I, stretched centromeric DNA at metaphase I as well as a slight reduction in crossover formation (PubMed:25065716). Reduced expression of stress-responsive genes in the root tip in response to stress treatment (PubMed:16856987).</text>
</comment>
<comment type="similarity">
    <text evidence="8">Belongs to the CND1 (condensin subunit 1) family.</text>
</comment>
<comment type="sequence caution" evidence="8">
    <conflict type="erroneous gene model prediction">
        <sequence resource="EMBL-CDS" id="CAB72176"/>
    </conflict>
</comment>
<gene>
    <name evidence="6 7" type="primary">CAP-D2</name>
    <name evidence="9" type="ordered locus">At3g57060</name>
    <name evidence="10" type="ORF">F24I3.140</name>
</gene>
<keyword id="KW-0025">Alternative splicing</keyword>
<keyword id="KW-0131">Cell cycle</keyword>
<keyword id="KW-0132">Cell division</keyword>
<keyword id="KW-0158">Chromosome</keyword>
<keyword id="KW-0226">DNA condensation</keyword>
<keyword id="KW-0498">Mitosis</keyword>
<keyword id="KW-0539">Nucleus</keyword>
<keyword id="KW-1185">Reference proteome</keyword>
<feature type="chain" id="PRO_0000454772" description="Condensin-1 complex subunit CAP-D2">
    <location>
        <begin position="1"/>
        <end position="1410"/>
    </location>
</feature>
<feature type="region of interest" description="Disordered" evidence="2">
    <location>
        <begin position="469"/>
        <end position="492"/>
    </location>
</feature>
<feature type="region of interest" description="Disordered" evidence="2">
    <location>
        <begin position="504"/>
        <end position="525"/>
    </location>
</feature>
<feature type="region of interest" description="Disordered" evidence="2">
    <location>
        <begin position="860"/>
        <end position="879"/>
    </location>
</feature>
<feature type="region of interest" description="Disordered" evidence="2">
    <location>
        <begin position="1208"/>
        <end position="1410"/>
    </location>
</feature>
<feature type="compositionally biased region" description="Basic and acidic residues" evidence="2">
    <location>
        <begin position="469"/>
        <end position="480"/>
    </location>
</feature>
<feature type="compositionally biased region" description="Polar residues" evidence="2">
    <location>
        <begin position="869"/>
        <end position="879"/>
    </location>
</feature>
<feature type="compositionally biased region" description="Basic and acidic residues" evidence="2">
    <location>
        <begin position="1208"/>
        <end position="1226"/>
    </location>
</feature>
<feature type="compositionally biased region" description="Acidic residues" evidence="2">
    <location>
        <begin position="1240"/>
        <end position="1284"/>
    </location>
</feature>
<feature type="compositionally biased region" description="Acidic residues" evidence="2">
    <location>
        <begin position="1306"/>
        <end position="1319"/>
    </location>
</feature>
<feature type="compositionally biased region" description="Polar residues" evidence="2">
    <location>
        <begin position="1323"/>
        <end position="1339"/>
    </location>
</feature>
<feature type="compositionally biased region" description="Acidic residues" evidence="2">
    <location>
        <begin position="1342"/>
        <end position="1365"/>
    </location>
</feature>
<feature type="compositionally biased region" description="Polar residues" evidence="2">
    <location>
        <begin position="1368"/>
        <end position="1379"/>
    </location>
</feature>
<feature type="splice variant" id="VSP_061381" description="In isoform 2.">
    <location>
        <begin position="1370"/>
        <end position="1383"/>
    </location>
</feature>
<name>CNDD2_ARATH</name>
<reference key="1">
    <citation type="journal article" date="2000" name="Nature">
        <title>Sequence and analysis of chromosome 3 of the plant Arabidopsis thaliana.</title>
        <authorList>
            <person name="Salanoubat M."/>
            <person name="Lemcke K."/>
            <person name="Rieger M."/>
            <person name="Ansorge W."/>
            <person name="Unseld M."/>
            <person name="Fartmann B."/>
            <person name="Valle G."/>
            <person name="Bloecker H."/>
            <person name="Perez-Alonso M."/>
            <person name="Obermaier B."/>
            <person name="Delseny M."/>
            <person name="Boutry M."/>
            <person name="Grivell L.A."/>
            <person name="Mache R."/>
            <person name="Puigdomenech P."/>
            <person name="De Simone V."/>
            <person name="Choisne N."/>
            <person name="Artiguenave F."/>
            <person name="Robert C."/>
            <person name="Brottier P."/>
            <person name="Wincker P."/>
            <person name="Cattolico L."/>
            <person name="Weissenbach J."/>
            <person name="Saurin W."/>
            <person name="Quetier F."/>
            <person name="Schaefer M."/>
            <person name="Mueller-Auer S."/>
            <person name="Gabel C."/>
            <person name="Fuchs M."/>
            <person name="Benes V."/>
            <person name="Wurmbach E."/>
            <person name="Drzonek H."/>
            <person name="Erfle H."/>
            <person name="Jordan N."/>
            <person name="Bangert S."/>
            <person name="Wiedelmann R."/>
            <person name="Kranz H."/>
            <person name="Voss H."/>
            <person name="Holland R."/>
            <person name="Brandt P."/>
            <person name="Nyakatura G."/>
            <person name="Vezzi A."/>
            <person name="D'Angelo M."/>
            <person name="Pallavicini A."/>
            <person name="Toppo S."/>
            <person name="Simionati B."/>
            <person name="Conrad A."/>
            <person name="Hornischer K."/>
            <person name="Kauer G."/>
            <person name="Loehnert T.-H."/>
            <person name="Nordsiek G."/>
            <person name="Reichelt J."/>
            <person name="Scharfe M."/>
            <person name="Schoen O."/>
            <person name="Bargues M."/>
            <person name="Terol J."/>
            <person name="Climent J."/>
            <person name="Navarro P."/>
            <person name="Collado C."/>
            <person name="Perez-Perez A."/>
            <person name="Ottenwaelder B."/>
            <person name="Duchemin D."/>
            <person name="Cooke R."/>
            <person name="Laudie M."/>
            <person name="Berger-Llauro C."/>
            <person name="Purnelle B."/>
            <person name="Masuy D."/>
            <person name="de Haan M."/>
            <person name="Maarse A.C."/>
            <person name="Alcaraz J.-P."/>
            <person name="Cottet A."/>
            <person name="Casacuberta E."/>
            <person name="Monfort A."/>
            <person name="Argiriou A."/>
            <person name="Flores M."/>
            <person name="Liguori R."/>
            <person name="Vitale D."/>
            <person name="Mannhaupt G."/>
            <person name="Haase D."/>
            <person name="Schoof H."/>
            <person name="Rudd S."/>
            <person name="Zaccaria P."/>
            <person name="Mewes H.-W."/>
            <person name="Mayer K.F.X."/>
            <person name="Kaul S."/>
            <person name="Town C.D."/>
            <person name="Koo H.L."/>
            <person name="Tallon L.J."/>
            <person name="Jenkins J."/>
            <person name="Rooney T."/>
            <person name="Rizzo M."/>
            <person name="Walts A."/>
            <person name="Utterback T."/>
            <person name="Fujii C.Y."/>
            <person name="Shea T.P."/>
            <person name="Creasy T.H."/>
            <person name="Haas B."/>
            <person name="Maiti R."/>
            <person name="Wu D."/>
            <person name="Peterson J."/>
            <person name="Van Aken S."/>
            <person name="Pai G."/>
            <person name="Militscher J."/>
            <person name="Sellers P."/>
            <person name="Gill J.E."/>
            <person name="Feldblyum T.V."/>
            <person name="Preuss D."/>
            <person name="Lin X."/>
            <person name="Nierman W.C."/>
            <person name="Salzberg S.L."/>
            <person name="White O."/>
            <person name="Venter J.C."/>
            <person name="Fraser C.M."/>
            <person name="Kaneko T."/>
            <person name="Nakamura Y."/>
            <person name="Sato S."/>
            <person name="Kato T."/>
            <person name="Asamizu E."/>
            <person name="Sasamoto S."/>
            <person name="Kimura T."/>
            <person name="Idesawa K."/>
            <person name="Kawashima K."/>
            <person name="Kishida Y."/>
            <person name="Kiyokawa C."/>
            <person name="Kohara M."/>
            <person name="Matsumoto M."/>
            <person name="Matsuno A."/>
            <person name="Muraki A."/>
            <person name="Nakayama S."/>
            <person name="Nakazaki N."/>
            <person name="Shinpo S."/>
            <person name="Takeuchi C."/>
            <person name="Wada T."/>
            <person name="Watanabe A."/>
            <person name="Yamada M."/>
            <person name="Yasuda M."/>
            <person name="Tabata S."/>
        </authorList>
    </citation>
    <scope>NUCLEOTIDE SEQUENCE [LARGE SCALE GENOMIC DNA]</scope>
    <source>
        <strain>cv. Columbia</strain>
    </source>
</reference>
<reference key="2">
    <citation type="journal article" date="2017" name="Plant J.">
        <title>Araport11: a complete reannotation of the Arabidopsis thaliana reference genome.</title>
        <authorList>
            <person name="Cheng C.Y."/>
            <person name="Krishnakumar V."/>
            <person name="Chan A.P."/>
            <person name="Thibaud-Nissen F."/>
            <person name="Schobel S."/>
            <person name="Town C.D."/>
        </authorList>
    </citation>
    <scope>GENOME REANNOTATION</scope>
    <source>
        <strain>cv. Columbia</strain>
    </source>
</reference>
<reference key="3">
    <citation type="journal article" date="2006" name="Plant J.">
        <title>A novel high-throughput genetic screen for stress-responsive mutants of Arabidopsis thaliana reveals new loci involving stress responses.</title>
        <authorList>
            <person name="Rama Devi S."/>
            <person name="Chen X."/>
            <person name="Oliver D.J."/>
            <person name="Xiang C."/>
        </authorList>
    </citation>
    <scope>FUNCTION</scope>
    <scope>DISRUPTION PHENOTYPE</scope>
</reference>
<reference key="4">
    <citation type="journal article" date="2012" name="Genes Dev.">
        <title>Condensins: universal organizers of chromosomes with diverse functions.</title>
        <authorList>
            <person name="Hirano T."/>
        </authorList>
    </citation>
    <scope>REVIEW</scope>
</reference>
<reference key="5">
    <citation type="journal article" date="2013" name="Chromosoma">
        <title>The Arabidopsis CAP-D proteins are required for correct chromatin organisation, growth and fertility.</title>
        <authorList>
            <person name="Schubert V."/>
            <person name="Lermontova I."/>
            <person name="Schubert I."/>
        </authorList>
    </citation>
    <scope>FUNCTION</scope>
    <scope>DISRUPTION PHENOTYPE</scope>
    <scope>DEVELOPMENTAL STAGE</scope>
    <scope>INDUCTION</scope>
    <source>
        <strain>cv. Columbia</strain>
    </source>
</reference>
<reference key="6">
    <citation type="journal article" date="2014" name="Plant J.">
        <title>The condensin complexes play distinct roles to ensure normal chromosome morphogenesis during meiotic division in Arabidopsis.</title>
        <authorList>
            <person name="Smith S.J."/>
            <person name="Osman K."/>
            <person name="Franklin F.C."/>
        </authorList>
    </citation>
    <scope>FUNCTION</scope>
    <scope>DISRUPTION PHENOTYPE</scope>
    <scope>TISSUE SPECIFICITY</scope>
    <scope>SUBCELLULAR LOCATION</scope>
    <source>
        <strain>cv. Columbia</strain>
    </source>
</reference>